<evidence type="ECO:0000255" key="1">
    <source>
        <dbReference type="HAMAP-Rule" id="MF_00147"/>
    </source>
</evidence>
<protein>
    <recommendedName>
        <fullName evidence="1">Triosephosphate isomerase</fullName>
        <shortName evidence="1">TIM</shortName>
        <shortName evidence="1">TPI</shortName>
        <ecNumber evidence="1">5.3.1.1</ecNumber>
    </recommendedName>
    <alternativeName>
        <fullName evidence="1">Triose-phosphate isomerase</fullName>
    </alternativeName>
</protein>
<feature type="chain" id="PRO_1000076664" description="Triosephosphate isomerase">
    <location>
        <begin position="1"/>
        <end position="253"/>
    </location>
</feature>
<feature type="active site" description="Electrophile" evidence="1">
    <location>
        <position position="97"/>
    </location>
</feature>
<feature type="active site" description="Proton acceptor" evidence="1">
    <location>
        <position position="169"/>
    </location>
</feature>
<feature type="binding site" evidence="1">
    <location>
        <begin position="9"/>
        <end position="11"/>
    </location>
    <ligand>
        <name>substrate</name>
    </ligand>
</feature>
<feature type="binding site" evidence="1">
    <location>
        <position position="175"/>
    </location>
    <ligand>
        <name>substrate</name>
    </ligand>
</feature>
<feature type="binding site" evidence="1">
    <location>
        <position position="215"/>
    </location>
    <ligand>
        <name>substrate</name>
    </ligand>
</feature>
<feature type="binding site" evidence="1">
    <location>
        <begin position="236"/>
        <end position="237"/>
    </location>
    <ligand>
        <name>substrate</name>
    </ligand>
</feature>
<reference key="1">
    <citation type="submission" date="2007-05" db="EMBL/GenBank/DDBJ databases">
        <title>Complete sequence of chromosome of Staphylococcus aureus subsp. aureus JH9.</title>
        <authorList>
            <consortium name="US DOE Joint Genome Institute"/>
            <person name="Copeland A."/>
            <person name="Lucas S."/>
            <person name="Lapidus A."/>
            <person name="Barry K."/>
            <person name="Detter J.C."/>
            <person name="Glavina del Rio T."/>
            <person name="Hammon N."/>
            <person name="Israni S."/>
            <person name="Pitluck S."/>
            <person name="Chain P."/>
            <person name="Malfatti S."/>
            <person name="Shin M."/>
            <person name="Vergez L."/>
            <person name="Schmutz J."/>
            <person name="Larimer F."/>
            <person name="Land M."/>
            <person name="Hauser L."/>
            <person name="Kyrpides N."/>
            <person name="Kim E."/>
            <person name="Tomasz A."/>
            <person name="Richardson P."/>
        </authorList>
    </citation>
    <scope>NUCLEOTIDE SEQUENCE [LARGE SCALE GENOMIC DNA]</scope>
    <source>
        <strain>JH9</strain>
    </source>
</reference>
<dbReference type="EC" id="5.3.1.1" evidence="1"/>
<dbReference type="EMBL" id="CP000703">
    <property type="protein sequence ID" value="ABQ48601.1"/>
    <property type="molecule type" value="Genomic_DNA"/>
</dbReference>
<dbReference type="RefSeq" id="WP_001260089.1">
    <property type="nucleotide sequence ID" value="NC_009487.1"/>
</dbReference>
<dbReference type="SMR" id="A5IQX8"/>
<dbReference type="KEGG" id="saj:SaurJH9_0799"/>
<dbReference type="HOGENOM" id="CLU_024251_2_3_9"/>
<dbReference type="UniPathway" id="UPA00109">
    <property type="reaction ID" value="UER00189"/>
</dbReference>
<dbReference type="UniPathway" id="UPA00138"/>
<dbReference type="GO" id="GO:0005829">
    <property type="term" value="C:cytosol"/>
    <property type="evidence" value="ECO:0007669"/>
    <property type="project" value="TreeGrafter"/>
</dbReference>
<dbReference type="GO" id="GO:0004807">
    <property type="term" value="F:triose-phosphate isomerase activity"/>
    <property type="evidence" value="ECO:0007669"/>
    <property type="project" value="UniProtKB-UniRule"/>
</dbReference>
<dbReference type="GO" id="GO:0006094">
    <property type="term" value="P:gluconeogenesis"/>
    <property type="evidence" value="ECO:0007669"/>
    <property type="project" value="UniProtKB-UniRule"/>
</dbReference>
<dbReference type="GO" id="GO:0046166">
    <property type="term" value="P:glyceraldehyde-3-phosphate biosynthetic process"/>
    <property type="evidence" value="ECO:0007669"/>
    <property type="project" value="TreeGrafter"/>
</dbReference>
<dbReference type="GO" id="GO:0019563">
    <property type="term" value="P:glycerol catabolic process"/>
    <property type="evidence" value="ECO:0007669"/>
    <property type="project" value="TreeGrafter"/>
</dbReference>
<dbReference type="GO" id="GO:0006096">
    <property type="term" value="P:glycolytic process"/>
    <property type="evidence" value="ECO:0007669"/>
    <property type="project" value="UniProtKB-UniRule"/>
</dbReference>
<dbReference type="CDD" id="cd00311">
    <property type="entry name" value="TIM"/>
    <property type="match status" value="1"/>
</dbReference>
<dbReference type="FunFam" id="3.20.20.70:FF:000016">
    <property type="entry name" value="Triosephosphate isomerase"/>
    <property type="match status" value="1"/>
</dbReference>
<dbReference type="Gene3D" id="3.20.20.70">
    <property type="entry name" value="Aldolase class I"/>
    <property type="match status" value="1"/>
</dbReference>
<dbReference type="HAMAP" id="MF_00147_B">
    <property type="entry name" value="TIM_B"/>
    <property type="match status" value="1"/>
</dbReference>
<dbReference type="InterPro" id="IPR013785">
    <property type="entry name" value="Aldolase_TIM"/>
</dbReference>
<dbReference type="InterPro" id="IPR035990">
    <property type="entry name" value="TIM_sf"/>
</dbReference>
<dbReference type="InterPro" id="IPR022896">
    <property type="entry name" value="TrioseP_Isoase_bac/euk"/>
</dbReference>
<dbReference type="InterPro" id="IPR000652">
    <property type="entry name" value="Triosephosphate_isomerase"/>
</dbReference>
<dbReference type="InterPro" id="IPR020861">
    <property type="entry name" value="Triosephosphate_isomerase_AS"/>
</dbReference>
<dbReference type="NCBIfam" id="TIGR00419">
    <property type="entry name" value="tim"/>
    <property type="match status" value="1"/>
</dbReference>
<dbReference type="PANTHER" id="PTHR21139">
    <property type="entry name" value="TRIOSEPHOSPHATE ISOMERASE"/>
    <property type="match status" value="1"/>
</dbReference>
<dbReference type="PANTHER" id="PTHR21139:SF42">
    <property type="entry name" value="TRIOSEPHOSPHATE ISOMERASE"/>
    <property type="match status" value="1"/>
</dbReference>
<dbReference type="Pfam" id="PF00121">
    <property type="entry name" value="TIM"/>
    <property type="match status" value="1"/>
</dbReference>
<dbReference type="SUPFAM" id="SSF51351">
    <property type="entry name" value="Triosephosphate isomerase (TIM)"/>
    <property type="match status" value="1"/>
</dbReference>
<dbReference type="PROSITE" id="PS00171">
    <property type="entry name" value="TIM_1"/>
    <property type="match status" value="1"/>
</dbReference>
<dbReference type="PROSITE" id="PS51440">
    <property type="entry name" value="TIM_2"/>
    <property type="match status" value="1"/>
</dbReference>
<organism>
    <name type="scientific">Staphylococcus aureus (strain JH9)</name>
    <dbReference type="NCBI Taxonomy" id="359786"/>
    <lineage>
        <taxon>Bacteria</taxon>
        <taxon>Bacillati</taxon>
        <taxon>Bacillota</taxon>
        <taxon>Bacilli</taxon>
        <taxon>Bacillales</taxon>
        <taxon>Staphylococcaceae</taxon>
        <taxon>Staphylococcus</taxon>
    </lineage>
</organism>
<comment type="function">
    <text evidence="1">Involved in the gluconeogenesis. Catalyzes stereospecifically the conversion of dihydroxyacetone phosphate (DHAP) to D-glyceraldehyde-3-phosphate (G3P).</text>
</comment>
<comment type="catalytic activity">
    <reaction evidence="1">
        <text>D-glyceraldehyde 3-phosphate = dihydroxyacetone phosphate</text>
        <dbReference type="Rhea" id="RHEA:18585"/>
        <dbReference type="ChEBI" id="CHEBI:57642"/>
        <dbReference type="ChEBI" id="CHEBI:59776"/>
        <dbReference type="EC" id="5.3.1.1"/>
    </reaction>
</comment>
<comment type="pathway">
    <text evidence="1">Carbohydrate biosynthesis; gluconeogenesis.</text>
</comment>
<comment type="pathway">
    <text evidence="1">Carbohydrate degradation; glycolysis; D-glyceraldehyde 3-phosphate from glycerone phosphate: step 1/1.</text>
</comment>
<comment type="subunit">
    <text evidence="1">Homodimer.</text>
</comment>
<comment type="subcellular location">
    <subcellularLocation>
        <location evidence="1">Cytoplasm</location>
    </subcellularLocation>
</comment>
<comment type="similarity">
    <text evidence="1">Belongs to the triosephosphate isomerase family.</text>
</comment>
<keyword id="KW-0963">Cytoplasm</keyword>
<keyword id="KW-0312">Gluconeogenesis</keyword>
<keyword id="KW-0324">Glycolysis</keyword>
<keyword id="KW-0413">Isomerase</keyword>
<gene>
    <name evidence="1" type="primary">tpiA</name>
    <name type="ordered locus">SaurJH9_0799</name>
</gene>
<accession>A5IQX8</accession>
<sequence length="253" mass="27262">MRTPIIAGNWKMNKTVQEAKDFVNALPTLPDSKEVESVICAPAIQLDALTTAVKEGKAQGLEIGAQNTYFEDNGAFTGETSPVALADLGVKYVVIGHSERRELFHETDEEINKKAHAIFKHGMTPIICVGETDEERESGKANDVVGEQVKKAVAGLSEDQLKSVVIAYEPIWAIGTGKSSTSEDANEMCAFVRQTIADLSSKEVSEATRIQYGGSVKPNNIKEYMAQTDIDGALVGGASLKVEDFVQLLEGAK</sequence>
<name>TPIS_STAA9</name>
<proteinExistence type="inferred from homology"/>